<dbReference type="EMBL" id="AE016815">
    <property type="protein sequence ID" value="AAS50961.2"/>
    <property type="molecule type" value="Genomic_DNA"/>
</dbReference>
<dbReference type="RefSeq" id="NP_983137.2">
    <property type="nucleotide sequence ID" value="NM_208490.2"/>
</dbReference>
<dbReference type="SMR" id="Q75D34"/>
<dbReference type="FunCoup" id="Q75D34">
    <property type="interactions" value="19"/>
</dbReference>
<dbReference type="STRING" id="284811.Q75D34"/>
<dbReference type="EnsemblFungi" id="AAS50961">
    <property type="protein sequence ID" value="AAS50961"/>
    <property type="gene ID" value="AGOS_ABR189W"/>
</dbReference>
<dbReference type="GeneID" id="4619247"/>
<dbReference type="KEGG" id="ago:AGOS_ABR189W"/>
<dbReference type="eggNOG" id="KOG2110">
    <property type="taxonomic scope" value="Eukaryota"/>
</dbReference>
<dbReference type="HOGENOM" id="CLU_025895_5_2_1"/>
<dbReference type="InParanoid" id="Q75D34"/>
<dbReference type="OMA" id="MNRKRMC"/>
<dbReference type="OrthoDB" id="1667587at2759"/>
<dbReference type="Proteomes" id="UP000000591">
    <property type="component" value="Chromosome II"/>
</dbReference>
<dbReference type="GO" id="GO:0005829">
    <property type="term" value="C:cytosol"/>
    <property type="evidence" value="ECO:0000318"/>
    <property type="project" value="GO_Central"/>
</dbReference>
<dbReference type="GO" id="GO:0005768">
    <property type="term" value="C:endosome"/>
    <property type="evidence" value="ECO:0007669"/>
    <property type="project" value="EnsemblFungi"/>
</dbReference>
<dbReference type="GO" id="GO:0000329">
    <property type="term" value="C:fungal-type vacuole membrane"/>
    <property type="evidence" value="ECO:0000318"/>
    <property type="project" value="GO_Central"/>
</dbReference>
<dbReference type="GO" id="GO:0034045">
    <property type="term" value="C:phagophore assembly site membrane"/>
    <property type="evidence" value="ECO:0000318"/>
    <property type="project" value="GO_Central"/>
</dbReference>
<dbReference type="GO" id="GO:0080025">
    <property type="term" value="F:phosphatidylinositol-3,5-bisphosphate binding"/>
    <property type="evidence" value="ECO:0000318"/>
    <property type="project" value="GO_Central"/>
</dbReference>
<dbReference type="GO" id="GO:0032266">
    <property type="term" value="F:phosphatidylinositol-3-phosphate binding"/>
    <property type="evidence" value="ECO:0000318"/>
    <property type="project" value="GO_Central"/>
</dbReference>
<dbReference type="GO" id="GO:0070273">
    <property type="term" value="F:phosphatidylinositol-4-phosphate binding"/>
    <property type="evidence" value="ECO:0007669"/>
    <property type="project" value="EnsemblFungi"/>
</dbReference>
<dbReference type="GO" id="GO:0030674">
    <property type="term" value="F:protein-macromolecule adaptor activity"/>
    <property type="evidence" value="ECO:0000318"/>
    <property type="project" value="GO_Central"/>
</dbReference>
<dbReference type="GO" id="GO:0000422">
    <property type="term" value="P:autophagy of mitochondrion"/>
    <property type="evidence" value="ECO:0000318"/>
    <property type="project" value="GO_Central"/>
</dbReference>
<dbReference type="GO" id="GO:0032258">
    <property type="term" value="P:cytoplasm to vacuole targeting by the Cvt pathway"/>
    <property type="evidence" value="ECO:0007669"/>
    <property type="project" value="EnsemblFungi"/>
</dbReference>
<dbReference type="GO" id="GO:0061723">
    <property type="term" value="P:glycophagy"/>
    <property type="evidence" value="ECO:0000318"/>
    <property type="project" value="GO_Central"/>
</dbReference>
<dbReference type="GO" id="GO:0044804">
    <property type="term" value="P:nucleophagy"/>
    <property type="evidence" value="ECO:0000318"/>
    <property type="project" value="GO_Central"/>
</dbReference>
<dbReference type="GO" id="GO:0000425">
    <property type="term" value="P:pexophagy"/>
    <property type="evidence" value="ECO:0000318"/>
    <property type="project" value="GO_Central"/>
</dbReference>
<dbReference type="GO" id="GO:0034727">
    <property type="term" value="P:piecemeal microautophagy of the nucleus"/>
    <property type="evidence" value="ECO:0007669"/>
    <property type="project" value="EnsemblFungi"/>
</dbReference>
<dbReference type="GO" id="GO:0034497">
    <property type="term" value="P:protein localization to phagophore assembly site"/>
    <property type="evidence" value="ECO:0000318"/>
    <property type="project" value="GO_Central"/>
</dbReference>
<dbReference type="GO" id="GO:0016050">
    <property type="term" value="P:vesicle organization"/>
    <property type="evidence" value="ECO:0007669"/>
    <property type="project" value="EnsemblFungi"/>
</dbReference>
<dbReference type="Gene3D" id="2.130.10.10">
    <property type="entry name" value="YVTN repeat-like/Quinoprotein amine dehydrogenase"/>
    <property type="match status" value="1"/>
</dbReference>
<dbReference type="InterPro" id="IPR048720">
    <property type="entry name" value="PROPPIN"/>
</dbReference>
<dbReference type="InterPro" id="IPR015943">
    <property type="entry name" value="WD40/YVTN_repeat-like_dom_sf"/>
</dbReference>
<dbReference type="InterPro" id="IPR036322">
    <property type="entry name" value="WD40_repeat_dom_sf"/>
</dbReference>
<dbReference type="InterPro" id="IPR001680">
    <property type="entry name" value="WD40_rpt"/>
</dbReference>
<dbReference type="PANTHER" id="PTHR11227">
    <property type="entry name" value="WD-REPEAT PROTEIN INTERACTING WITH PHOSPHOINOSIDES WIPI -RELATED"/>
    <property type="match status" value="1"/>
</dbReference>
<dbReference type="Pfam" id="PF21032">
    <property type="entry name" value="PROPPIN"/>
    <property type="match status" value="2"/>
</dbReference>
<dbReference type="SMART" id="SM00320">
    <property type="entry name" value="WD40"/>
    <property type="match status" value="3"/>
</dbReference>
<dbReference type="SUPFAM" id="SSF50978">
    <property type="entry name" value="WD40 repeat-like"/>
    <property type="match status" value="1"/>
</dbReference>
<organism>
    <name type="scientific">Eremothecium gossypii (strain ATCC 10895 / CBS 109.51 / FGSC 9923 / NRRL Y-1056)</name>
    <name type="common">Yeast</name>
    <name type="synonym">Ashbya gossypii</name>
    <dbReference type="NCBI Taxonomy" id="284811"/>
    <lineage>
        <taxon>Eukaryota</taxon>
        <taxon>Fungi</taxon>
        <taxon>Dikarya</taxon>
        <taxon>Ascomycota</taxon>
        <taxon>Saccharomycotina</taxon>
        <taxon>Saccharomycetes</taxon>
        <taxon>Saccharomycetales</taxon>
        <taxon>Saccharomycetaceae</taxon>
        <taxon>Eremothecium</taxon>
    </lineage>
</organism>
<name>ATG21_EREGS</name>
<keyword id="KW-0072">Autophagy</keyword>
<keyword id="KW-0963">Cytoplasm</keyword>
<keyword id="KW-0472">Membrane</keyword>
<keyword id="KW-0653">Protein transport</keyword>
<keyword id="KW-1185">Reference proteome</keyword>
<keyword id="KW-0677">Repeat</keyword>
<keyword id="KW-0813">Transport</keyword>
<keyword id="KW-0926">Vacuole</keyword>
<keyword id="KW-0853">WD repeat</keyword>
<protein>
    <recommendedName>
        <fullName>Autophagy-related protein 21</fullName>
    </recommendedName>
</protein>
<evidence type="ECO:0000250" key="1"/>
<evidence type="ECO:0000250" key="2">
    <source>
        <dbReference type="UniProtKB" id="Q02887"/>
    </source>
</evidence>
<evidence type="ECO:0000305" key="3"/>
<comment type="function">
    <text evidence="1">Required for cytoplasm to vacuole transport (Cvt) vesicles formation and mitophagy. Involved in binding of phosphatidylethanolamine to ATG8 and in recruitment of ATG8 and ATG5 to the pre-autophagosomal structure. Protects ATG8 from ARG4-mediated cleavage (By similarity).</text>
</comment>
<comment type="subcellular location">
    <subcellularLocation>
        <location evidence="1">Cytoplasm</location>
    </subcellularLocation>
    <subcellularLocation>
        <location evidence="1">Membrane</location>
        <topology evidence="1">Peripheral membrane protein</topology>
    </subcellularLocation>
    <subcellularLocation>
        <location evidence="1">Vacuole membrane</location>
        <topology evidence="1">Peripheral membrane protein</topology>
    </subcellularLocation>
    <text evidence="1">Vacuolar and perivacuolar punctate structures.</text>
</comment>
<comment type="domain">
    <text evidence="1">Contains a beta-propeller domain involved in specific binding to phosphatidylinositol 3,5-bisphosphate (PIP2).</text>
</comment>
<comment type="domain">
    <text evidence="2">The L/FRRG motif is essential for the cytoplasm to vacuole transport (Cvt) pathway and for the recruitment of ATG8 and ATG16 to the PAS in nutrient-rich medium and in both its recruitment to and dissociation from the PAS under starvation conditions.</text>
</comment>
<comment type="similarity">
    <text evidence="3">Belongs to the WD repeat PROPPIN family.</text>
</comment>
<sequence length="409" mass="46000">MKVLRFNQDASCFSAVSRPHSMTIYNCDPFGKCFELENSVVTSESCDTECLTKAQGDQCSNFVTEMLFATSLIAVVNRDQGLQKARKLRIVNTKRKTTICELTFPHEVVDIVMNRKRMCVLLSSDQIFIYDISCMKLLQTISVLEDKLKMAVSDQGHVSTSVVGRQLQGETSMVRIALCSDDKSILCYTAYCRTNKNSYILNDLVVYDALNMTPLNYLNTVHKGNVACLCISNDGKMVATASDKGTIVRIFSTGDENTLQSGNTLLHEFRRGTRPCSIYEMKIDPTRRYLACVGHTDTIHIFDLERQGQQNKSLSDSQSTALLREGKLSKESTLQFASFLSKKVISKIPNQNMERHFAHIKVDDSVRHCLGFPDEFSDRVYVASNNGEFQVWNIPQSGGECILVKKSKF</sequence>
<gene>
    <name type="primary">ATG21</name>
    <name type="ordered locus">ABR189W</name>
</gene>
<proteinExistence type="inferred from homology"/>
<feature type="chain" id="PRO_0000050875" description="Autophagy-related protein 21">
    <location>
        <begin position="1"/>
        <end position="409"/>
    </location>
</feature>
<feature type="repeat" description="WD 1">
    <location>
        <begin position="1"/>
        <end position="35"/>
    </location>
</feature>
<feature type="repeat" description="WD 2">
    <location>
        <begin position="221"/>
        <end position="261"/>
    </location>
</feature>
<feature type="repeat" description="WD 3">
    <location>
        <begin position="273"/>
        <end position="312"/>
    </location>
</feature>
<feature type="repeat" description="WD 4">
    <location>
        <begin position="361"/>
        <end position="402"/>
    </location>
</feature>
<feature type="short sequence motif" description="L/FRRG motif" evidence="2">
    <location>
        <begin position="269"/>
        <end position="273"/>
    </location>
</feature>
<reference key="1">
    <citation type="journal article" date="2004" name="Science">
        <title>The Ashbya gossypii genome as a tool for mapping the ancient Saccharomyces cerevisiae genome.</title>
        <authorList>
            <person name="Dietrich F.S."/>
            <person name="Voegeli S."/>
            <person name="Brachat S."/>
            <person name="Lerch A."/>
            <person name="Gates K."/>
            <person name="Steiner S."/>
            <person name="Mohr C."/>
            <person name="Poehlmann R."/>
            <person name="Luedi P."/>
            <person name="Choi S."/>
            <person name="Wing R.A."/>
            <person name="Flavier A."/>
            <person name="Gaffney T.D."/>
            <person name="Philippsen P."/>
        </authorList>
    </citation>
    <scope>NUCLEOTIDE SEQUENCE [LARGE SCALE GENOMIC DNA]</scope>
    <source>
        <strain>ATCC 10895 / CBS 109.51 / FGSC 9923 / NRRL Y-1056</strain>
    </source>
</reference>
<reference key="2">
    <citation type="journal article" date="2013" name="G3 (Bethesda)">
        <title>Genomes of Ashbya fungi isolated from insects reveal four mating-type loci, numerous translocations, lack of transposons, and distinct gene duplications.</title>
        <authorList>
            <person name="Dietrich F.S."/>
            <person name="Voegeli S."/>
            <person name="Kuo S."/>
            <person name="Philippsen P."/>
        </authorList>
    </citation>
    <scope>GENOME REANNOTATION</scope>
    <scope>SEQUENCE REVISION TO 198-201</scope>
    <source>
        <strain>ATCC 10895 / CBS 109.51 / FGSC 9923 / NRRL Y-1056</strain>
    </source>
</reference>
<accession>Q75D34</accession>